<comment type="function">
    <text evidence="2">Transaldolase is important for the balance of metabolites in the pentose-phosphate pathway.</text>
</comment>
<comment type="catalytic activity">
    <reaction evidence="2">
        <text>D-sedoheptulose 7-phosphate + D-glyceraldehyde 3-phosphate = D-erythrose 4-phosphate + beta-D-fructose 6-phosphate</text>
        <dbReference type="Rhea" id="RHEA:17053"/>
        <dbReference type="ChEBI" id="CHEBI:16897"/>
        <dbReference type="ChEBI" id="CHEBI:57483"/>
        <dbReference type="ChEBI" id="CHEBI:57634"/>
        <dbReference type="ChEBI" id="CHEBI:59776"/>
        <dbReference type="EC" id="2.2.1.2"/>
    </reaction>
</comment>
<comment type="pathway">
    <text evidence="2">Carbohydrate degradation; pentose phosphate pathway; D-glyceraldehyde 3-phosphate and beta-D-fructose 6-phosphate from D-ribose 5-phosphate and D-xylulose 5-phosphate (non-oxidative stage): step 2/3.</text>
</comment>
<comment type="subunit">
    <text evidence="1">Homodimer.</text>
</comment>
<comment type="subcellular location">
    <subcellularLocation>
        <location evidence="2">Cytoplasm</location>
    </subcellularLocation>
</comment>
<comment type="similarity">
    <text evidence="2">Belongs to the transaldolase family. Type 1 subfamily.</text>
</comment>
<accession>A4Y494</accession>
<organism>
    <name type="scientific">Shewanella putrefaciens (strain CN-32 / ATCC BAA-453)</name>
    <dbReference type="NCBI Taxonomy" id="319224"/>
    <lineage>
        <taxon>Bacteria</taxon>
        <taxon>Pseudomonadati</taxon>
        <taxon>Pseudomonadota</taxon>
        <taxon>Gammaproteobacteria</taxon>
        <taxon>Alteromonadales</taxon>
        <taxon>Shewanellaceae</taxon>
        <taxon>Shewanella</taxon>
    </lineage>
</organism>
<protein>
    <recommendedName>
        <fullName evidence="2">Transaldolase</fullName>
        <ecNumber evidence="2">2.2.1.2</ecNumber>
    </recommendedName>
</protein>
<evidence type="ECO:0000250" key="1"/>
<evidence type="ECO:0000255" key="2">
    <source>
        <dbReference type="HAMAP-Rule" id="MF_00492"/>
    </source>
</evidence>
<gene>
    <name evidence="2" type="primary">tal</name>
    <name type="ordered locus">Sputcn32_1049</name>
</gene>
<proteinExistence type="inferred from homology"/>
<keyword id="KW-0963">Cytoplasm</keyword>
<keyword id="KW-0570">Pentose shunt</keyword>
<keyword id="KW-0704">Schiff base</keyword>
<keyword id="KW-0808">Transferase</keyword>
<feature type="chain" id="PRO_1000014526" description="Transaldolase">
    <location>
        <begin position="1"/>
        <end position="318"/>
    </location>
</feature>
<feature type="active site" description="Schiff-base intermediate with substrate" evidence="2">
    <location>
        <position position="132"/>
    </location>
</feature>
<dbReference type="EC" id="2.2.1.2" evidence="2"/>
<dbReference type="EMBL" id="CP000681">
    <property type="protein sequence ID" value="ABP74777.1"/>
    <property type="molecule type" value="Genomic_DNA"/>
</dbReference>
<dbReference type="SMR" id="A4Y494"/>
<dbReference type="STRING" id="319224.Sputcn32_1049"/>
<dbReference type="KEGG" id="spc:Sputcn32_1049"/>
<dbReference type="eggNOG" id="COG0176">
    <property type="taxonomic scope" value="Bacteria"/>
</dbReference>
<dbReference type="HOGENOM" id="CLU_047470_0_1_6"/>
<dbReference type="UniPathway" id="UPA00115">
    <property type="reaction ID" value="UER00414"/>
</dbReference>
<dbReference type="GO" id="GO:0005829">
    <property type="term" value="C:cytosol"/>
    <property type="evidence" value="ECO:0007669"/>
    <property type="project" value="TreeGrafter"/>
</dbReference>
<dbReference type="GO" id="GO:0004801">
    <property type="term" value="F:transaldolase activity"/>
    <property type="evidence" value="ECO:0000250"/>
    <property type="project" value="UniProtKB"/>
</dbReference>
<dbReference type="GO" id="GO:0005975">
    <property type="term" value="P:carbohydrate metabolic process"/>
    <property type="evidence" value="ECO:0007669"/>
    <property type="project" value="InterPro"/>
</dbReference>
<dbReference type="GO" id="GO:0006098">
    <property type="term" value="P:pentose-phosphate shunt"/>
    <property type="evidence" value="ECO:0007669"/>
    <property type="project" value="UniProtKB-UniRule"/>
</dbReference>
<dbReference type="CDD" id="cd00957">
    <property type="entry name" value="Transaldolase_TalAB"/>
    <property type="match status" value="1"/>
</dbReference>
<dbReference type="FunFam" id="3.20.20.70:FF:000002">
    <property type="entry name" value="Transaldolase"/>
    <property type="match status" value="1"/>
</dbReference>
<dbReference type="Gene3D" id="3.20.20.70">
    <property type="entry name" value="Aldolase class I"/>
    <property type="match status" value="1"/>
</dbReference>
<dbReference type="HAMAP" id="MF_00492">
    <property type="entry name" value="Transaldolase_1"/>
    <property type="match status" value="1"/>
</dbReference>
<dbReference type="InterPro" id="IPR013785">
    <property type="entry name" value="Aldolase_TIM"/>
</dbReference>
<dbReference type="InterPro" id="IPR001585">
    <property type="entry name" value="TAL/FSA"/>
</dbReference>
<dbReference type="InterPro" id="IPR004730">
    <property type="entry name" value="Transaldolase_1"/>
</dbReference>
<dbReference type="InterPro" id="IPR018225">
    <property type="entry name" value="Transaldolase_AS"/>
</dbReference>
<dbReference type="NCBIfam" id="NF009001">
    <property type="entry name" value="PRK12346.1"/>
    <property type="match status" value="1"/>
</dbReference>
<dbReference type="NCBIfam" id="TIGR00874">
    <property type="entry name" value="talAB"/>
    <property type="match status" value="1"/>
</dbReference>
<dbReference type="PANTHER" id="PTHR10683">
    <property type="entry name" value="TRANSALDOLASE"/>
    <property type="match status" value="1"/>
</dbReference>
<dbReference type="PANTHER" id="PTHR10683:SF18">
    <property type="entry name" value="TRANSALDOLASE"/>
    <property type="match status" value="1"/>
</dbReference>
<dbReference type="Pfam" id="PF00923">
    <property type="entry name" value="TAL_FSA"/>
    <property type="match status" value="1"/>
</dbReference>
<dbReference type="SUPFAM" id="SSF51569">
    <property type="entry name" value="Aldolase"/>
    <property type="match status" value="1"/>
</dbReference>
<dbReference type="PROSITE" id="PS01054">
    <property type="entry name" value="TRANSALDOLASE_1"/>
    <property type="match status" value="1"/>
</dbReference>
<dbReference type="PROSITE" id="PS00958">
    <property type="entry name" value="TRANSALDOLASE_2"/>
    <property type="match status" value="1"/>
</dbReference>
<sequence length="318" mass="35099">MANTLEQLKSYTTIVADTGDIEAIKRYQPEDATTNPSLILKAAQIPEYSYLIDNAIAWAQTQSTELEQQIDDASDKLAVNIGVEILKLVPGRISTEVDARLSFDKEKSIAKAHKLVRLYQEAGIDKSRILIKLASTWEGICAAKELEQEGINCNLTLLFSFAQARACAEAGVYLISPFVGRILDWYKKDTGKDYAPANDPGVVSVTEIYNYYKQHGYNTVVMGASFRNIGEIIELAGCDRLTIGPSLLEELANSQAQIQAKLLPATTTVAAETPLTEAQFRWDFNQDPMAVEKLAEGIRNFAIDQGKLEVMLKAKLSN</sequence>
<reference key="1">
    <citation type="submission" date="2007-04" db="EMBL/GenBank/DDBJ databases">
        <title>Complete sequence of Shewanella putrefaciens CN-32.</title>
        <authorList>
            <consortium name="US DOE Joint Genome Institute"/>
            <person name="Copeland A."/>
            <person name="Lucas S."/>
            <person name="Lapidus A."/>
            <person name="Barry K."/>
            <person name="Detter J.C."/>
            <person name="Glavina del Rio T."/>
            <person name="Hammon N."/>
            <person name="Israni S."/>
            <person name="Dalin E."/>
            <person name="Tice H."/>
            <person name="Pitluck S."/>
            <person name="Chain P."/>
            <person name="Malfatti S."/>
            <person name="Shin M."/>
            <person name="Vergez L."/>
            <person name="Schmutz J."/>
            <person name="Larimer F."/>
            <person name="Land M."/>
            <person name="Hauser L."/>
            <person name="Kyrpides N."/>
            <person name="Mikhailova N."/>
            <person name="Romine M.F."/>
            <person name="Fredrickson J."/>
            <person name="Tiedje J."/>
            <person name="Richardson P."/>
        </authorList>
    </citation>
    <scope>NUCLEOTIDE SEQUENCE [LARGE SCALE GENOMIC DNA]</scope>
    <source>
        <strain>CN-32 / ATCC BAA-453</strain>
    </source>
</reference>
<name>TAL_SHEPC</name>